<feature type="chain" id="PRO_1000097590" description="3-dehydroquinate dehydratase">
    <location>
        <begin position="1"/>
        <end position="154"/>
    </location>
</feature>
<feature type="active site" description="Proton acceptor" evidence="1">
    <location>
        <position position="23"/>
    </location>
</feature>
<feature type="active site" description="Proton donor" evidence="1">
    <location>
        <position position="100"/>
    </location>
</feature>
<feature type="binding site" evidence="1">
    <location>
        <position position="74"/>
    </location>
    <ligand>
        <name>substrate</name>
    </ligand>
</feature>
<feature type="binding site" evidence="1">
    <location>
        <position position="80"/>
    </location>
    <ligand>
        <name>substrate</name>
    </ligand>
</feature>
<feature type="binding site" evidence="1">
    <location>
        <position position="87"/>
    </location>
    <ligand>
        <name>substrate</name>
    </ligand>
</feature>
<feature type="binding site" evidence="1">
    <location>
        <begin position="101"/>
        <end position="102"/>
    </location>
    <ligand>
        <name>substrate</name>
    </ligand>
</feature>
<feature type="binding site" evidence="1">
    <location>
        <position position="111"/>
    </location>
    <ligand>
        <name>substrate</name>
    </ligand>
</feature>
<feature type="site" description="Transition state stabilizer" evidence="1">
    <location>
        <position position="18"/>
    </location>
</feature>
<dbReference type="EC" id="4.2.1.10" evidence="1"/>
<dbReference type="EMBL" id="CP000687">
    <property type="protein sequence ID" value="ABY70455.1"/>
    <property type="molecule type" value="Genomic_DNA"/>
</dbReference>
<dbReference type="RefSeq" id="WP_005599518.1">
    <property type="nucleotide sequence ID" value="NC_010278.1"/>
</dbReference>
<dbReference type="SMR" id="B0BTE1"/>
<dbReference type="GeneID" id="48600167"/>
<dbReference type="KEGG" id="apj:APJL_1905"/>
<dbReference type="HOGENOM" id="CLU_090968_1_0_6"/>
<dbReference type="UniPathway" id="UPA00053">
    <property type="reaction ID" value="UER00086"/>
</dbReference>
<dbReference type="Proteomes" id="UP000008547">
    <property type="component" value="Chromosome"/>
</dbReference>
<dbReference type="GO" id="GO:0003855">
    <property type="term" value="F:3-dehydroquinate dehydratase activity"/>
    <property type="evidence" value="ECO:0007669"/>
    <property type="project" value="UniProtKB-UniRule"/>
</dbReference>
<dbReference type="GO" id="GO:0008652">
    <property type="term" value="P:amino acid biosynthetic process"/>
    <property type="evidence" value="ECO:0007669"/>
    <property type="project" value="UniProtKB-KW"/>
</dbReference>
<dbReference type="GO" id="GO:0009073">
    <property type="term" value="P:aromatic amino acid family biosynthetic process"/>
    <property type="evidence" value="ECO:0007669"/>
    <property type="project" value="UniProtKB-KW"/>
</dbReference>
<dbReference type="GO" id="GO:0009423">
    <property type="term" value="P:chorismate biosynthetic process"/>
    <property type="evidence" value="ECO:0007669"/>
    <property type="project" value="UniProtKB-UniRule"/>
</dbReference>
<dbReference type="GO" id="GO:0019631">
    <property type="term" value="P:quinate catabolic process"/>
    <property type="evidence" value="ECO:0007669"/>
    <property type="project" value="TreeGrafter"/>
</dbReference>
<dbReference type="CDD" id="cd00466">
    <property type="entry name" value="DHQase_II"/>
    <property type="match status" value="1"/>
</dbReference>
<dbReference type="Gene3D" id="3.40.50.9100">
    <property type="entry name" value="Dehydroquinase, class II"/>
    <property type="match status" value="1"/>
</dbReference>
<dbReference type="HAMAP" id="MF_00169">
    <property type="entry name" value="AroQ"/>
    <property type="match status" value="1"/>
</dbReference>
<dbReference type="InterPro" id="IPR001874">
    <property type="entry name" value="DHquinase_II"/>
</dbReference>
<dbReference type="InterPro" id="IPR018509">
    <property type="entry name" value="DHquinase_II_CS"/>
</dbReference>
<dbReference type="InterPro" id="IPR036441">
    <property type="entry name" value="DHquinase_II_sf"/>
</dbReference>
<dbReference type="NCBIfam" id="TIGR01088">
    <property type="entry name" value="aroQ"/>
    <property type="match status" value="1"/>
</dbReference>
<dbReference type="NCBIfam" id="NF003804">
    <property type="entry name" value="PRK05395.1-1"/>
    <property type="match status" value="1"/>
</dbReference>
<dbReference type="NCBIfam" id="NF003805">
    <property type="entry name" value="PRK05395.1-2"/>
    <property type="match status" value="1"/>
</dbReference>
<dbReference type="NCBIfam" id="NF003806">
    <property type="entry name" value="PRK05395.1-3"/>
    <property type="match status" value="1"/>
</dbReference>
<dbReference type="NCBIfam" id="NF003807">
    <property type="entry name" value="PRK05395.1-4"/>
    <property type="match status" value="1"/>
</dbReference>
<dbReference type="PANTHER" id="PTHR21272">
    <property type="entry name" value="CATABOLIC 3-DEHYDROQUINASE"/>
    <property type="match status" value="1"/>
</dbReference>
<dbReference type="PANTHER" id="PTHR21272:SF3">
    <property type="entry name" value="CATABOLIC 3-DEHYDROQUINASE"/>
    <property type="match status" value="1"/>
</dbReference>
<dbReference type="Pfam" id="PF01220">
    <property type="entry name" value="DHquinase_II"/>
    <property type="match status" value="1"/>
</dbReference>
<dbReference type="PIRSF" id="PIRSF001399">
    <property type="entry name" value="DHquinase_II"/>
    <property type="match status" value="1"/>
</dbReference>
<dbReference type="SUPFAM" id="SSF52304">
    <property type="entry name" value="Type II 3-dehydroquinate dehydratase"/>
    <property type="match status" value="1"/>
</dbReference>
<dbReference type="PROSITE" id="PS01029">
    <property type="entry name" value="DEHYDROQUINASE_II"/>
    <property type="match status" value="1"/>
</dbReference>
<name>AROQ_ACTPJ</name>
<protein>
    <recommendedName>
        <fullName evidence="1">3-dehydroquinate dehydratase</fullName>
        <shortName evidence="1">3-dehydroquinase</shortName>
        <ecNumber evidence="1">4.2.1.10</ecNumber>
    </recommendedName>
    <alternativeName>
        <fullName evidence="1">Type II DHQase</fullName>
    </alternativeName>
</protein>
<sequence length="154" mass="17179">MKKILLLNGPNLNMLGKREPHIYGSQTLSDIEQHLQQSAQAQGYELDYFQANGEESLINRIHQAFQNTDFIIINPGAFTHTSVAIRDALLAVSIPFIEVHLSNVHAREPFRHHSYLSDVAKGVICGLGAKGYDYALDFAISELQKIQLGEMMNG</sequence>
<organism>
    <name type="scientific">Actinobacillus pleuropneumoniae serotype 3 (strain JL03)</name>
    <dbReference type="NCBI Taxonomy" id="434271"/>
    <lineage>
        <taxon>Bacteria</taxon>
        <taxon>Pseudomonadati</taxon>
        <taxon>Pseudomonadota</taxon>
        <taxon>Gammaproteobacteria</taxon>
        <taxon>Pasteurellales</taxon>
        <taxon>Pasteurellaceae</taxon>
        <taxon>Actinobacillus</taxon>
    </lineage>
</organism>
<evidence type="ECO:0000255" key="1">
    <source>
        <dbReference type="HAMAP-Rule" id="MF_00169"/>
    </source>
</evidence>
<accession>B0BTE1</accession>
<reference key="1">
    <citation type="journal article" date="2008" name="PLoS ONE">
        <title>Genome biology of Actinobacillus pleuropneumoniae JL03, an isolate of serotype 3 prevalent in China.</title>
        <authorList>
            <person name="Xu Z."/>
            <person name="Zhou Y."/>
            <person name="Li L."/>
            <person name="Zhou R."/>
            <person name="Xiao S."/>
            <person name="Wan Y."/>
            <person name="Zhang S."/>
            <person name="Wang K."/>
            <person name="Li W."/>
            <person name="Li L."/>
            <person name="Jin H."/>
            <person name="Kang M."/>
            <person name="Dalai B."/>
            <person name="Li T."/>
            <person name="Liu L."/>
            <person name="Cheng Y."/>
            <person name="Zhang L."/>
            <person name="Xu T."/>
            <person name="Zheng H."/>
            <person name="Pu S."/>
            <person name="Wang B."/>
            <person name="Gu W."/>
            <person name="Zhang X.L."/>
            <person name="Zhu G.-F."/>
            <person name="Wang S."/>
            <person name="Zhao G.-P."/>
            <person name="Chen H."/>
        </authorList>
    </citation>
    <scope>NUCLEOTIDE SEQUENCE [LARGE SCALE GENOMIC DNA]</scope>
    <source>
        <strain>JL03</strain>
    </source>
</reference>
<proteinExistence type="inferred from homology"/>
<keyword id="KW-0028">Amino-acid biosynthesis</keyword>
<keyword id="KW-0057">Aromatic amino acid biosynthesis</keyword>
<keyword id="KW-0456">Lyase</keyword>
<comment type="function">
    <text evidence="1">Catalyzes a trans-dehydration via an enolate intermediate.</text>
</comment>
<comment type="catalytic activity">
    <reaction evidence="1">
        <text>3-dehydroquinate = 3-dehydroshikimate + H2O</text>
        <dbReference type="Rhea" id="RHEA:21096"/>
        <dbReference type="ChEBI" id="CHEBI:15377"/>
        <dbReference type="ChEBI" id="CHEBI:16630"/>
        <dbReference type="ChEBI" id="CHEBI:32364"/>
        <dbReference type="EC" id="4.2.1.10"/>
    </reaction>
</comment>
<comment type="pathway">
    <text evidence="1">Metabolic intermediate biosynthesis; chorismate biosynthesis; chorismate from D-erythrose 4-phosphate and phosphoenolpyruvate: step 3/7.</text>
</comment>
<comment type="subunit">
    <text evidence="1">Homododecamer.</text>
</comment>
<comment type="similarity">
    <text evidence="1">Belongs to the type-II 3-dehydroquinase family.</text>
</comment>
<gene>
    <name evidence="1" type="primary">aroQ</name>
    <name type="ordered locus">APJL_1905</name>
</gene>